<dbReference type="EC" id="1.11.1.28" evidence="2"/>
<dbReference type="EMBL" id="CP001472">
    <property type="protein sequence ID" value="ACO33852.1"/>
    <property type="molecule type" value="Genomic_DNA"/>
</dbReference>
<dbReference type="RefSeq" id="WP_015898092.1">
    <property type="nucleotide sequence ID" value="NC_012483.1"/>
</dbReference>
<dbReference type="SMR" id="C1F4K1"/>
<dbReference type="STRING" id="240015.ACP_3044"/>
<dbReference type="KEGG" id="aca:ACP_3044"/>
<dbReference type="eggNOG" id="COG2128">
    <property type="taxonomic scope" value="Bacteria"/>
</dbReference>
<dbReference type="HOGENOM" id="CLU_105328_0_0_0"/>
<dbReference type="InParanoid" id="C1F4K1"/>
<dbReference type="OrthoDB" id="9801997at2"/>
<dbReference type="Proteomes" id="UP000002207">
    <property type="component" value="Chromosome"/>
</dbReference>
<dbReference type="GO" id="GO:0008785">
    <property type="term" value="F:alkyl hydroperoxide reductase activity"/>
    <property type="evidence" value="ECO:0007669"/>
    <property type="project" value="UniProtKB-UniRule"/>
</dbReference>
<dbReference type="GO" id="GO:0015036">
    <property type="term" value="F:disulfide oxidoreductase activity"/>
    <property type="evidence" value="ECO:0007669"/>
    <property type="project" value="TreeGrafter"/>
</dbReference>
<dbReference type="GO" id="GO:0032843">
    <property type="term" value="F:hydroperoxide reductase activity"/>
    <property type="evidence" value="ECO:0007669"/>
    <property type="project" value="InterPro"/>
</dbReference>
<dbReference type="GO" id="GO:0051920">
    <property type="term" value="F:peroxiredoxin activity"/>
    <property type="evidence" value="ECO:0007669"/>
    <property type="project" value="InterPro"/>
</dbReference>
<dbReference type="GO" id="GO:0045454">
    <property type="term" value="P:cell redox homeostasis"/>
    <property type="evidence" value="ECO:0007669"/>
    <property type="project" value="TreeGrafter"/>
</dbReference>
<dbReference type="GO" id="GO:0006979">
    <property type="term" value="P:response to oxidative stress"/>
    <property type="evidence" value="ECO:0007669"/>
    <property type="project" value="InterPro"/>
</dbReference>
<dbReference type="Gene3D" id="1.20.1290.10">
    <property type="entry name" value="AhpD-like"/>
    <property type="match status" value="1"/>
</dbReference>
<dbReference type="HAMAP" id="MF_01676">
    <property type="entry name" value="AhpD"/>
    <property type="match status" value="1"/>
</dbReference>
<dbReference type="InterPro" id="IPR004674">
    <property type="entry name" value="AhpD"/>
</dbReference>
<dbReference type="InterPro" id="IPR029032">
    <property type="entry name" value="AhpD-like"/>
</dbReference>
<dbReference type="InterPro" id="IPR004675">
    <property type="entry name" value="AhpD_core"/>
</dbReference>
<dbReference type="InterPro" id="IPR003779">
    <property type="entry name" value="CMD-like"/>
</dbReference>
<dbReference type="NCBIfam" id="TIGR00777">
    <property type="entry name" value="ahpD"/>
    <property type="match status" value="1"/>
</dbReference>
<dbReference type="NCBIfam" id="TIGR00778">
    <property type="entry name" value="ahpD_dom"/>
    <property type="match status" value="1"/>
</dbReference>
<dbReference type="PANTHER" id="PTHR33930">
    <property type="entry name" value="ALKYL HYDROPEROXIDE REDUCTASE AHPD"/>
    <property type="match status" value="1"/>
</dbReference>
<dbReference type="PANTHER" id="PTHR33930:SF7">
    <property type="entry name" value="ALKYL HYDROPEROXIDE REDUCTASE AHPD"/>
    <property type="match status" value="1"/>
</dbReference>
<dbReference type="Pfam" id="PF02627">
    <property type="entry name" value="CMD"/>
    <property type="match status" value="1"/>
</dbReference>
<dbReference type="SUPFAM" id="SSF69118">
    <property type="entry name" value="AhpD-like"/>
    <property type="match status" value="1"/>
</dbReference>
<evidence type="ECO:0000250" key="1"/>
<evidence type="ECO:0000255" key="2">
    <source>
        <dbReference type="HAMAP-Rule" id="MF_01676"/>
    </source>
</evidence>
<proteinExistence type="inferred from homology"/>
<accession>C1F4K1</accession>
<organism>
    <name type="scientific">Acidobacterium capsulatum (strain ATCC 51196 / DSM 11244 / BCRC 80197 / JCM 7670 / NBRC 15755 / NCIMB 13165 / 161)</name>
    <dbReference type="NCBI Taxonomy" id="240015"/>
    <lineage>
        <taxon>Bacteria</taxon>
        <taxon>Pseudomonadati</taxon>
        <taxon>Acidobacteriota</taxon>
        <taxon>Terriglobia</taxon>
        <taxon>Terriglobales</taxon>
        <taxon>Acidobacteriaceae</taxon>
        <taxon>Acidobacterium</taxon>
    </lineage>
</organism>
<comment type="function">
    <text evidence="2">Antioxidant protein with alkyl hydroperoxidase activity. Required for the reduction of the AhpC active site cysteine residues and for the regeneration of the AhpC enzyme activity.</text>
</comment>
<comment type="catalytic activity">
    <reaction evidence="2">
        <text>N(6)-[(R)-dihydrolipoyl]-L-lysyl-[lipoyl-carrier protein] + a hydroperoxide = N(6)-[(R)-lipoyl]-L-lysyl-[lipoyl-carrier protein] + an alcohol + H2O</text>
        <dbReference type="Rhea" id="RHEA:62636"/>
        <dbReference type="Rhea" id="RHEA-COMP:10502"/>
        <dbReference type="Rhea" id="RHEA-COMP:16355"/>
        <dbReference type="ChEBI" id="CHEBI:15377"/>
        <dbReference type="ChEBI" id="CHEBI:30879"/>
        <dbReference type="ChEBI" id="CHEBI:35924"/>
        <dbReference type="ChEBI" id="CHEBI:83099"/>
        <dbReference type="ChEBI" id="CHEBI:83100"/>
        <dbReference type="EC" id="1.11.1.28"/>
    </reaction>
</comment>
<comment type="similarity">
    <text evidence="2">Belongs to the AhpD family.</text>
</comment>
<feature type="chain" id="PRO_1000187331" description="Alkyl hydroperoxide reductase AhpD">
    <location>
        <begin position="1"/>
        <end position="183"/>
    </location>
</feature>
<feature type="active site" description="Proton donor" evidence="2">
    <location>
        <position position="132"/>
    </location>
</feature>
<feature type="active site" description="Cysteine sulfenic acid (-SOH) intermediate" evidence="2">
    <location>
        <position position="135"/>
    </location>
</feature>
<feature type="disulfide bond" evidence="1">
    <location>
        <begin position="132"/>
        <end position="135"/>
    </location>
</feature>
<feature type="disulfide bond" description="Interchain (with AhpC); in linked form" evidence="2">
    <location>
        <position position="135"/>
    </location>
</feature>
<protein>
    <recommendedName>
        <fullName evidence="2">Alkyl hydroperoxide reductase AhpD</fullName>
        <ecNumber evidence="2">1.11.1.28</ecNumber>
    </recommendedName>
    <alternativeName>
        <fullName evidence="2">Alkylhydroperoxidase AhpD</fullName>
    </alternativeName>
</protein>
<reference key="1">
    <citation type="journal article" date="2009" name="Appl. Environ. Microbiol.">
        <title>Three genomes from the phylum Acidobacteria provide insight into the lifestyles of these microorganisms in soils.</title>
        <authorList>
            <person name="Ward N.L."/>
            <person name="Challacombe J.F."/>
            <person name="Janssen P.H."/>
            <person name="Henrissat B."/>
            <person name="Coutinho P.M."/>
            <person name="Wu M."/>
            <person name="Xie G."/>
            <person name="Haft D.H."/>
            <person name="Sait M."/>
            <person name="Badger J."/>
            <person name="Barabote R.D."/>
            <person name="Bradley B."/>
            <person name="Brettin T.S."/>
            <person name="Brinkac L.M."/>
            <person name="Bruce D."/>
            <person name="Creasy T."/>
            <person name="Daugherty S.C."/>
            <person name="Davidsen T.M."/>
            <person name="DeBoy R.T."/>
            <person name="Detter J.C."/>
            <person name="Dodson R.J."/>
            <person name="Durkin A.S."/>
            <person name="Ganapathy A."/>
            <person name="Gwinn-Giglio M."/>
            <person name="Han C.S."/>
            <person name="Khouri H."/>
            <person name="Kiss H."/>
            <person name="Kothari S.P."/>
            <person name="Madupu R."/>
            <person name="Nelson K.E."/>
            <person name="Nelson W.C."/>
            <person name="Paulsen I."/>
            <person name="Penn K."/>
            <person name="Ren Q."/>
            <person name="Rosovitz M.J."/>
            <person name="Selengut J.D."/>
            <person name="Shrivastava S."/>
            <person name="Sullivan S.A."/>
            <person name="Tapia R."/>
            <person name="Thompson L.S."/>
            <person name="Watkins K.L."/>
            <person name="Yang Q."/>
            <person name="Yu C."/>
            <person name="Zafar N."/>
            <person name="Zhou L."/>
            <person name="Kuske C.R."/>
        </authorList>
    </citation>
    <scope>NUCLEOTIDE SEQUENCE [LARGE SCALE GENOMIC DNA]</scope>
    <source>
        <strain>ATCC 51196 / DSM 11244 / BCRC 80197 / JCM 7670 / NBRC 15755 / NCIMB 13165 / 161</strain>
    </source>
</reference>
<gene>
    <name evidence="2" type="primary">ahpD</name>
    <name type="ordered locus">ACP_3044</name>
</gene>
<name>AHPD_ACIC5</name>
<keyword id="KW-0049">Antioxidant</keyword>
<keyword id="KW-1015">Disulfide bond</keyword>
<keyword id="KW-0560">Oxidoreductase</keyword>
<keyword id="KW-0575">Peroxidase</keyword>
<keyword id="KW-0676">Redox-active center</keyword>
<keyword id="KW-1185">Reference proteome</keyword>
<sequence>MPIDTVMETLPGYAKDIKLNYSTLVRQNTELTPQQLWGTVVASAIATRNDTLTAAALEDGAQHLSEQALEAARIAAALMSMNNIFYRFQHLSSNEKYATMPARLRMNGMRTHGVEPVDFELWSLAVSAINGCGKCVDSHEKVLREKGAGEDLVLAAVRVASVIHAIGAVLDAEKVHQPEAAMA</sequence>